<evidence type="ECO:0000250" key="1">
    <source>
        <dbReference type="UniProtKB" id="O03042"/>
    </source>
</evidence>
<evidence type="ECO:0000255" key="2">
    <source>
        <dbReference type="HAMAP-Rule" id="MF_01338"/>
    </source>
</evidence>
<feature type="propeptide" id="PRO_0000299991" evidence="2">
    <location>
        <begin position="1"/>
        <end position="2"/>
    </location>
</feature>
<feature type="chain" id="PRO_0000299992" description="Ribulose bisphosphate carboxylase large chain">
    <location>
        <begin position="3"/>
        <end position="479"/>
    </location>
</feature>
<feature type="active site" description="Proton acceptor" evidence="2">
    <location>
        <position position="175"/>
    </location>
</feature>
<feature type="active site" description="Proton acceptor" evidence="2">
    <location>
        <position position="294"/>
    </location>
</feature>
<feature type="binding site" description="in homodimeric partner" evidence="2">
    <location>
        <position position="123"/>
    </location>
    <ligand>
        <name>substrate</name>
    </ligand>
</feature>
<feature type="binding site" evidence="2">
    <location>
        <position position="173"/>
    </location>
    <ligand>
        <name>substrate</name>
    </ligand>
</feature>
<feature type="binding site" evidence="2">
    <location>
        <position position="177"/>
    </location>
    <ligand>
        <name>substrate</name>
    </ligand>
</feature>
<feature type="binding site" description="via carbamate group" evidence="2">
    <location>
        <position position="201"/>
    </location>
    <ligand>
        <name>Mg(2+)</name>
        <dbReference type="ChEBI" id="CHEBI:18420"/>
    </ligand>
</feature>
<feature type="binding site" evidence="2">
    <location>
        <position position="203"/>
    </location>
    <ligand>
        <name>Mg(2+)</name>
        <dbReference type="ChEBI" id="CHEBI:18420"/>
    </ligand>
</feature>
<feature type="binding site" evidence="2">
    <location>
        <position position="204"/>
    </location>
    <ligand>
        <name>Mg(2+)</name>
        <dbReference type="ChEBI" id="CHEBI:18420"/>
    </ligand>
</feature>
<feature type="binding site" evidence="2">
    <location>
        <position position="295"/>
    </location>
    <ligand>
        <name>substrate</name>
    </ligand>
</feature>
<feature type="binding site" evidence="2">
    <location>
        <position position="327"/>
    </location>
    <ligand>
        <name>substrate</name>
    </ligand>
</feature>
<feature type="binding site" evidence="2">
    <location>
        <position position="379"/>
    </location>
    <ligand>
        <name>substrate</name>
    </ligand>
</feature>
<feature type="site" description="Transition state stabilizer" evidence="2">
    <location>
        <position position="334"/>
    </location>
</feature>
<feature type="modified residue" description="N6-carboxylysine" evidence="2">
    <location>
        <position position="201"/>
    </location>
</feature>
<feature type="modified residue" description="Phosphoserine" evidence="1">
    <location>
        <position position="208"/>
    </location>
</feature>
<feature type="modified residue" description="Phosphothreonine" evidence="1">
    <location>
        <position position="330"/>
    </location>
</feature>
<feature type="disulfide bond" description="Interchain; in linked form" evidence="2">
    <location>
        <position position="247"/>
    </location>
</feature>
<reference key="1">
    <citation type="submission" date="2007-03" db="EMBL/GenBank/DDBJ databases">
        <title>Sequencing analysis of Crucihimalaya wallichii chloroplast DNA.</title>
        <authorList>
            <person name="Hosouchi T."/>
            <person name="Tsuruoka H."/>
            <person name="Kotani H."/>
        </authorList>
    </citation>
    <scope>NUCLEOTIDE SEQUENCE [LARGE SCALE GENOMIC DNA]</scope>
</reference>
<comment type="function">
    <text evidence="2">RuBisCO catalyzes two reactions: the carboxylation of D-ribulose 1,5-bisphosphate, the primary event in carbon dioxide fixation, as well as the oxidative fragmentation of the pentose substrate in the photorespiration process. Both reactions occur simultaneously and in competition at the same active site.</text>
</comment>
<comment type="catalytic activity">
    <reaction evidence="2">
        <text>2 (2R)-3-phosphoglycerate + 2 H(+) = D-ribulose 1,5-bisphosphate + CO2 + H2O</text>
        <dbReference type="Rhea" id="RHEA:23124"/>
        <dbReference type="ChEBI" id="CHEBI:15377"/>
        <dbReference type="ChEBI" id="CHEBI:15378"/>
        <dbReference type="ChEBI" id="CHEBI:16526"/>
        <dbReference type="ChEBI" id="CHEBI:57870"/>
        <dbReference type="ChEBI" id="CHEBI:58272"/>
        <dbReference type="EC" id="4.1.1.39"/>
    </reaction>
</comment>
<comment type="catalytic activity">
    <reaction evidence="2">
        <text>D-ribulose 1,5-bisphosphate + O2 = 2-phosphoglycolate + (2R)-3-phosphoglycerate + 2 H(+)</text>
        <dbReference type="Rhea" id="RHEA:36631"/>
        <dbReference type="ChEBI" id="CHEBI:15378"/>
        <dbReference type="ChEBI" id="CHEBI:15379"/>
        <dbReference type="ChEBI" id="CHEBI:57870"/>
        <dbReference type="ChEBI" id="CHEBI:58033"/>
        <dbReference type="ChEBI" id="CHEBI:58272"/>
    </reaction>
</comment>
<comment type="cofactor">
    <cofactor evidence="2">
        <name>Mg(2+)</name>
        <dbReference type="ChEBI" id="CHEBI:18420"/>
    </cofactor>
    <text evidence="2">Binds 1 Mg(2+) ion per subunit.</text>
</comment>
<comment type="subunit">
    <text evidence="2">Heterohexadecamer of 8 large chains and 8 small chains; disulfide-linked. The disulfide link is formed within the large subunit homodimers.</text>
</comment>
<comment type="subcellular location">
    <subcellularLocation>
        <location>Plastid</location>
        <location>Chloroplast</location>
    </subcellularLocation>
</comment>
<comment type="PTM">
    <text evidence="2">The disulfide bond which can form in the large chain dimeric partners within the hexadecamer appears to be associated with oxidative stress and protein turnover.</text>
</comment>
<comment type="miscellaneous">
    <text evidence="2">The basic functional RuBisCO is composed of a large chain homodimer in a 'head-to-tail' conformation. In form I RuBisCO this homodimer is arranged in a barrel-like tetramer with the small subunits forming a tetrameric 'cap' on each end of the 'barrel'.</text>
</comment>
<comment type="similarity">
    <text evidence="2">Belongs to the RuBisCO large chain family. Type I subfamily.</text>
</comment>
<dbReference type="EC" id="4.1.1.39" evidence="2"/>
<dbReference type="EMBL" id="AP009372">
    <property type="protein sequence ID" value="BAF50294.1"/>
    <property type="molecule type" value="Genomic_DNA"/>
</dbReference>
<dbReference type="RefSeq" id="YP_001123470.1">
    <property type="nucleotide sequence ID" value="NC_009271.1"/>
</dbReference>
<dbReference type="SMR" id="A4QKT9"/>
<dbReference type="GeneID" id="4962679"/>
<dbReference type="GO" id="GO:0009507">
    <property type="term" value="C:chloroplast"/>
    <property type="evidence" value="ECO:0007669"/>
    <property type="project" value="UniProtKB-SubCell"/>
</dbReference>
<dbReference type="GO" id="GO:0000287">
    <property type="term" value="F:magnesium ion binding"/>
    <property type="evidence" value="ECO:0007669"/>
    <property type="project" value="UniProtKB-UniRule"/>
</dbReference>
<dbReference type="GO" id="GO:0004497">
    <property type="term" value="F:monooxygenase activity"/>
    <property type="evidence" value="ECO:0007669"/>
    <property type="project" value="UniProtKB-KW"/>
</dbReference>
<dbReference type="GO" id="GO:0016984">
    <property type="term" value="F:ribulose-bisphosphate carboxylase activity"/>
    <property type="evidence" value="ECO:0007669"/>
    <property type="project" value="UniProtKB-UniRule"/>
</dbReference>
<dbReference type="GO" id="GO:0009853">
    <property type="term" value="P:photorespiration"/>
    <property type="evidence" value="ECO:0007669"/>
    <property type="project" value="UniProtKB-KW"/>
</dbReference>
<dbReference type="GO" id="GO:0019253">
    <property type="term" value="P:reductive pentose-phosphate cycle"/>
    <property type="evidence" value="ECO:0007669"/>
    <property type="project" value="UniProtKB-UniRule"/>
</dbReference>
<dbReference type="CDD" id="cd08212">
    <property type="entry name" value="RuBisCO_large_I"/>
    <property type="match status" value="1"/>
</dbReference>
<dbReference type="FunFam" id="3.20.20.110:FF:000001">
    <property type="entry name" value="Ribulose bisphosphate carboxylase large chain"/>
    <property type="match status" value="1"/>
</dbReference>
<dbReference type="FunFam" id="3.30.70.150:FF:000001">
    <property type="entry name" value="Ribulose bisphosphate carboxylase large chain"/>
    <property type="match status" value="1"/>
</dbReference>
<dbReference type="Gene3D" id="3.20.20.110">
    <property type="entry name" value="Ribulose bisphosphate carboxylase, large subunit, C-terminal domain"/>
    <property type="match status" value="1"/>
</dbReference>
<dbReference type="Gene3D" id="3.30.70.150">
    <property type="entry name" value="RuBisCO large subunit, N-terminal domain"/>
    <property type="match status" value="1"/>
</dbReference>
<dbReference type="HAMAP" id="MF_01338">
    <property type="entry name" value="RuBisCO_L_type1"/>
    <property type="match status" value="1"/>
</dbReference>
<dbReference type="InterPro" id="IPR033966">
    <property type="entry name" value="RuBisCO"/>
</dbReference>
<dbReference type="InterPro" id="IPR020878">
    <property type="entry name" value="RuBisCo_large_chain_AS"/>
</dbReference>
<dbReference type="InterPro" id="IPR000685">
    <property type="entry name" value="RuBisCO_lsu_C"/>
</dbReference>
<dbReference type="InterPro" id="IPR036376">
    <property type="entry name" value="RuBisCO_lsu_C_sf"/>
</dbReference>
<dbReference type="InterPro" id="IPR017443">
    <property type="entry name" value="RuBisCO_lsu_fd_N"/>
</dbReference>
<dbReference type="InterPro" id="IPR036422">
    <property type="entry name" value="RuBisCO_lsu_N_sf"/>
</dbReference>
<dbReference type="InterPro" id="IPR020888">
    <property type="entry name" value="RuBisCO_lsuI"/>
</dbReference>
<dbReference type="NCBIfam" id="NF003252">
    <property type="entry name" value="PRK04208.1"/>
    <property type="match status" value="1"/>
</dbReference>
<dbReference type="PANTHER" id="PTHR42704">
    <property type="entry name" value="RIBULOSE BISPHOSPHATE CARBOXYLASE"/>
    <property type="match status" value="1"/>
</dbReference>
<dbReference type="PANTHER" id="PTHR42704:SF16">
    <property type="entry name" value="RIBULOSE BISPHOSPHATE CARBOXYLASE LARGE CHAIN"/>
    <property type="match status" value="1"/>
</dbReference>
<dbReference type="Pfam" id="PF00016">
    <property type="entry name" value="RuBisCO_large"/>
    <property type="match status" value="1"/>
</dbReference>
<dbReference type="Pfam" id="PF02788">
    <property type="entry name" value="RuBisCO_large_N"/>
    <property type="match status" value="1"/>
</dbReference>
<dbReference type="SFLD" id="SFLDG01052">
    <property type="entry name" value="RuBisCO"/>
    <property type="match status" value="1"/>
</dbReference>
<dbReference type="SFLD" id="SFLDS00014">
    <property type="entry name" value="RuBisCO"/>
    <property type="match status" value="1"/>
</dbReference>
<dbReference type="SFLD" id="SFLDG00301">
    <property type="entry name" value="RuBisCO-like_proteins"/>
    <property type="match status" value="1"/>
</dbReference>
<dbReference type="SUPFAM" id="SSF51649">
    <property type="entry name" value="RuBisCo, C-terminal domain"/>
    <property type="match status" value="1"/>
</dbReference>
<dbReference type="SUPFAM" id="SSF54966">
    <property type="entry name" value="RuBisCO, large subunit, small (N-terminal) domain"/>
    <property type="match status" value="1"/>
</dbReference>
<dbReference type="PROSITE" id="PS00157">
    <property type="entry name" value="RUBISCO_LARGE"/>
    <property type="match status" value="1"/>
</dbReference>
<proteinExistence type="inferred from homology"/>
<protein>
    <recommendedName>
        <fullName evidence="2">Ribulose bisphosphate carboxylase large chain</fullName>
        <shortName evidence="2">RuBisCO large subunit</shortName>
        <ecNumber evidence="2">4.1.1.39</ecNumber>
    </recommendedName>
</protein>
<sequence length="479" mass="52994">MSPQTETKASVGFKAGVKEYKLTYYTPEYETKDTDILAAFRVTPQPGVPPEEAGAAVAAESSTGTWTTVWTDGLTSLDRYKGRCYHIEPVPGEETQFIAYVAYPLDLFEEGSVTNMFTSIVGNVFGFKALAALRLEDLRIPPAYTKTFQGPPHGIQVERDKLNKYGRPLLGCTIKPKLGLSAKNYGRAVYECLRGGLDFTKDDENVNSQPFMRWRDRFLFCAEAIYKSQAETGEIKGHYLNATAGTCEEMIKRAVFARELGVPIVMHDYLTGGFTANTSLAHYCRDNGLLLHIHRAMHAVIDRQKNHGMHFRVLAKALRLSGGDHIHAGTVVGKLEGDRESTLGFVDLLRDDYVEKDRSRGIFFTQDWVSLPGVLPVASGGIHVWHMPALTEIFGDDSVLQFGGGTLGHPWGNAPGAVANRVALEACVQARNEGRDLAVEGNEIIREACKWSPELAAACEVWKEIRFNFPTIDKLDGQE</sequence>
<accession>A4QKT9</accession>
<gene>
    <name evidence="2" type="primary">rbcL</name>
</gene>
<geneLocation type="chloroplast"/>
<organism>
    <name type="scientific">Crucihimalaya wallichii</name>
    <name type="common">Rock-cress</name>
    <name type="synonym">Arabidopsis campestris</name>
    <dbReference type="NCBI Taxonomy" id="78192"/>
    <lineage>
        <taxon>Eukaryota</taxon>
        <taxon>Viridiplantae</taxon>
        <taxon>Streptophyta</taxon>
        <taxon>Embryophyta</taxon>
        <taxon>Tracheophyta</taxon>
        <taxon>Spermatophyta</taxon>
        <taxon>Magnoliopsida</taxon>
        <taxon>eudicotyledons</taxon>
        <taxon>Gunneridae</taxon>
        <taxon>Pentapetalae</taxon>
        <taxon>rosids</taxon>
        <taxon>malvids</taxon>
        <taxon>Brassicales</taxon>
        <taxon>Brassicaceae</taxon>
        <taxon>Crucihimalayeae</taxon>
        <taxon>Crucihimalaya</taxon>
    </lineage>
</organism>
<name>RBL_CRUWA</name>
<keyword id="KW-0113">Calvin cycle</keyword>
<keyword id="KW-0120">Carbon dioxide fixation</keyword>
<keyword id="KW-0150">Chloroplast</keyword>
<keyword id="KW-1015">Disulfide bond</keyword>
<keyword id="KW-0456">Lyase</keyword>
<keyword id="KW-0460">Magnesium</keyword>
<keyword id="KW-0479">Metal-binding</keyword>
<keyword id="KW-0503">Monooxygenase</keyword>
<keyword id="KW-0560">Oxidoreductase</keyword>
<keyword id="KW-0597">Phosphoprotein</keyword>
<keyword id="KW-0601">Photorespiration</keyword>
<keyword id="KW-0602">Photosynthesis</keyword>
<keyword id="KW-0934">Plastid</keyword>